<accession>B2FPA7</accession>
<organism>
    <name type="scientific">Stenotrophomonas maltophilia (strain K279a)</name>
    <dbReference type="NCBI Taxonomy" id="522373"/>
    <lineage>
        <taxon>Bacteria</taxon>
        <taxon>Pseudomonadati</taxon>
        <taxon>Pseudomonadota</taxon>
        <taxon>Gammaproteobacteria</taxon>
        <taxon>Lysobacterales</taxon>
        <taxon>Lysobacteraceae</taxon>
        <taxon>Stenotrophomonas</taxon>
        <taxon>Stenotrophomonas maltophilia group</taxon>
    </lineage>
</organism>
<keyword id="KW-1185">Reference proteome</keyword>
<keyword id="KW-0687">Ribonucleoprotein</keyword>
<keyword id="KW-0689">Ribosomal protein</keyword>
<name>RL34_STRMK</name>
<feature type="chain" id="PRO_1000196113" description="Large ribosomal subunit protein bL34">
    <location>
        <begin position="1"/>
        <end position="46"/>
    </location>
</feature>
<feature type="region of interest" description="Disordered" evidence="2">
    <location>
        <begin position="1"/>
        <end position="46"/>
    </location>
</feature>
<feature type="compositionally biased region" description="Polar residues" evidence="2">
    <location>
        <begin position="1"/>
        <end position="11"/>
    </location>
</feature>
<feature type="compositionally biased region" description="Basic residues" evidence="2">
    <location>
        <begin position="12"/>
        <end position="24"/>
    </location>
</feature>
<feature type="compositionally biased region" description="Basic residues" evidence="2">
    <location>
        <begin position="32"/>
        <end position="46"/>
    </location>
</feature>
<reference key="1">
    <citation type="journal article" date="2008" name="Genome Biol.">
        <title>The complete genome, comparative and functional analysis of Stenotrophomonas maltophilia reveals an organism heavily shielded by drug resistance determinants.</title>
        <authorList>
            <person name="Crossman L.C."/>
            <person name="Gould V.C."/>
            <person name="Dow J.M."/>
            <person name="Vernikos G.S."/>
            <person name="Okazaki A."/>
            <person name="Sebaihia M."/>
            <person name="Saunders D."/>
            <person name="Arrowsmith C."/>
            <person name="Carver T."/>
            <person name="Peters N."/>
            <person name="Adlem E."/>
            <person name="Kerhornou A."/>
            <person name="Lord A."/>
            <person name="Murphy L."/>
            <person name="Seeger K."/>
            <person name="Squares R."/>
            <person name="Rutter S."/>
            <person name="Quail M.A."/>
            <person name="Rajandream M.A."/>
            <person name="Harris D."/>
            <person name="Churcher C."/>
            <person name="Bentley S.D."/>
            <person name="Parkhill J."/>
            <person name="Thomson N.R."/>
            <person name="Avison M.B."/>
        </authorList>
    </citation>
    <scope>NUCLEOTIDE SEQUENCE [LARGE SCALE GENOMIC DNA]</scope>
    <source>
        <strain>K279a</strain>
    </source>
</reference>
<proteinExistence type="inferred from homology"/>
<gene>
    <name evidence="1" type="primary">rpmH</name>
    <name type="ordered locus">Smlt4695</name>
</gene>
<evidence type="ECO:0000255" key="1">
    <source>
        <dbReference type="HAMAP-Rule" id="MF_00391"/>
    </source>
</evidence>
<evidence type="ECO:0000256" key="2">
    <source>
        <dbReference type="SAM" id="MobiDB-lite"/>
    </source>
</evidence>
<evidence type="ECO:0000305" key="3"/>
<comment type="similarity">
    <text evidence="1">Belongs to the bacterial ribosomal protein bL34 family.</text>
</comment>
<protein>
    <recommendedName>
        <fullName evidence="1">Large ribosomal subunit protein bL34</fullName>
    </recommendedName>
    <alternativeName>
        <fullName evidence="3">50S ribosomal protein L34</fullName>
    </alternativeName>
</protein>
<dbReference type="EMBL" id="AM743169">
    <property type="protein sequence ID" value="CAQ48047.1"/>
    <property type="molecule type" value="Genomic_DNA"/>
</dbReference>
<dbReference type="RefSeq" id="WP_005411729.1">
    <property type="nucleotide sequence ID" value="NC_010943.1"/>
</dbReference>
<dbReference type="SMR" id="B2FPA7"/>
<dbReference type="EnsemblBacteria" id="CAQ48047">
    <property type="protein sequence ID" value="CAQ48047"/>
    <property type="gene ID" value="Smlt4695"/>
</dbReference>
<dbReference type="GeneID" id="97263295"/>
<dbReference type="KEGG" id="sml:Smlt4695"/>
<dbReference type="eggNOG" id="COG0230">
    <property type="taxonomic scope" value="Bacteria"/>
</dbReference>
<dbReference type="HOGENOM" id="CLU_129938_2_0_6"/>
<dbReference type="Proteomes" id="UP000008840">
    <property type="component" value="Chromosome"/>
</dbReference>
<dbReference type="GO" id="GO:1990904">
    <property type="term" value="C:ribonucleoprotein complex"/>
    <property type="evidence" value="ECO:0007669"/>
    <property type="project" value="UniProtKB-KW"/>
</dbReference>
<dbReference type="GO" id="GO:0005840">
    <property type="term" value="C:ribosome"/>
    <property type="evidence" value="ECO:0007669"/>
    <property type="project" value="UniProtKB-KW"/>
</dbReference>
<dbReference type="GO" id="GO:0003735">
    <property type="term" value="F:structural constituent of ribosome"/>
    <property type="evidence" value="ECO:0007669"/>
    <property type="project" value="InterPro"/>
</dbReference>
<dbReference type="GO" id="GO:0006412">
    <property type="term" value="P:translation"/>
    <property type="evidence" value="ECO:0007669"/>
    <property type="project" value="UniProtKB-UniRule"/>
</dbReference>
<dbReference type="FunFam" id="1.10.287.3980:FF:000001">
    <property type="entry name" value="Mitochondrial ribosomal protein L34"/>
    <property type="match status" value="1"/>
</dbReference>
<dbReference type="Gene3D" id="1.10.287.3980">
    <property type="match status" value="1"/>
</dbReference>
<dbReference type="HAMAP" id="MF_00391">
    <property type="entry name" value="Ribosomal_bL34"/>
    <property type="match status" value="1"/>
</dbReference>
<dbReference type="InterPro" id="IPR000271">
    <property type="entry name" value="Ribosomal_bL34"/>
</dbReference>
<dbReference type="InterPro" id="IPR020939">
    <property type="entry name" value="Ribosomal_bL34_CS"/>
</dbReference>
<dbReference type="NCBIfam" id="TIGR01030">
    <property type="entry name" value="rpmH_bact"/>
    <property type="match status" value="1"/>
</dbReference>
<dbReference type="PANTHER" id="PTHR14503:SF4">
    <property type="entry name" value="LARGE RIBOSOMAL SUBUNIT PROTEIN BL34M"/>
    <property type="match status" value="1"/>
</dbReference>
<dbReference type="PANTHER" id="PTHR14503">
    <property type="entry name" value="MITOCHONDRIAL RIBOSOMAL PROTEIN 34 FAMILY MEMBER"/>
    <property type="match status" value="1"/>
</dbReference>
<dbReference type="Pfam" id="PF00468">
    <property type="entry name" value="Ribosomal_L34"/>
    <property type="match status" value="1"/>
</dbReference>
<dbReference type="PROSITE" id="PS00784">
    <property type="entry name" value="RIBOSOMAL_L34"/>
    <property type="match status" value="1"/>
</dbReference>
<sequence>MATKRTYQPSNLKRKRDHGFRARMKTADGRKILSRRRAKGRKVLSA</sequence>